<accession>Q0KIY2</accession>
<evidence type="ECO:0000250" key="1">
    <source>
        <dbReference type="UniProtKB" id="P02144"/>
    </source>
</evidence>
<evidence type="ECO:0000250" key="2">
    <source>
        <dbReference type="UniProtKB" id="P02185"/>
    </source>
</evidence>
<evidence type="ECO:0000250" key="3">
    <source>
        <dbReference type="UniProtKB" id="P02189"/>
    </source>
</evidence>
<evidence type="ECO:0000250" key="4">
    <source>
        <dbReference type="UniProtKB" id="P04247"/>
    </source>
</evidence>
<evidence type="ECO:0000250" key="5">
    <source>
        <dbReference type="UniProtKB" id="P68082"/>
    </source>
</evidence>
<evidence type="ECO:0000250" key="6">
    <source>
        <dbReference type="UniProtKB" id="Q9QZ76"/>
    </source>
</evidence>
<evidence type="ECO:0000255" key="7">
    <source>
        <dbReference type="PROSITE-ProRule" id="PRU00238"/>
    </source>
</evidence>
<dbReference type="EC" id="1.7.-.-" evidence="1"/>
<dbReference type="EC" id="1.11.1.-" evidence="1"/>
<dbReference type="EMBL" id="AB271150">
    <property type="protein sequence ID" value="BAF03585.1"/>
    <property type="molecule type" value="mRNA"/>
</dbReference>
<dbReference type="SMR" id="Q0KIY2"/>
<dbReference type="GO" id="GO:0070062">
    <property type="term" value="C:extracellular exosome"/>
    <property type="evidence" value="ECO:0007669"/>
    <property type="project" value="TreeGrafter"/>
</dbReference>
<dbReference type="GO" id="GO:0016528">
    <property type="term" value="C:sarcoplasm"/>
    <property type="evidence" value="ECO:0000250"/>
    <property type="project" value="UniProtKB"/>
</dbReference>
<dbReference type="GO" id="GO:0020037">
    <property type="term" value="F:heme binding"/>
    <property type="evidence" value="ECO:0007669"/>
    <property type="project" value="InterPro"/>
</dbReference>
<dbReference type="GO" id="GO:0046872">
    <property type="term" value="F:metal ion binding"/>
    <property type="evidence" value="ECO:0007669"/>
    <property type="project" value="UniProtKB-KW"/>
</dbReference>
<dbReference type="GO" id="GO:0098809">
    <property type="term" value="F:nitrite reductase activity"/>
    <property type="evidence" value="ECO:0000250"/>
    <property type="project" value="UniProtKB"/>
</dbReference>
<dbReference type="GO" id="GO:0019825">
    <property type="term" value="F:oxygen binding"/>
    <property type="evidence" value="ECO:0007669"/>
    <property type="project" value="InterPro"/>
</dbReference>
<dbReference type="GO" id="GO:0005344">
    <property type="term" value="F:oxygen carrier activity"/>
    <property type="evidence" value="ECO:0000250"/>
    <property type="project" value="UniProtKB"/>
</dbReference>
<dbReference type="GO" id="GO:0004601">
    <property type="term" value="F:peroxidase activity"/>
    <property type="evidence" value="ECO:0000250"/>
    <property type="project" value="UniProtKB"/>
</dbReference>
<dbReference type="GO" id="GO:0019430">
    <property type="term" value="P:removal of superoxide radicals"/>
    <property type="evidence" value="ECO:0000250"/>
    <property type="project" value="UniProtKB"/>
</dbReference>
<dbReference type="CDD" id="cd08926">
    <property type="entry name" value="Mb"/>
    <property type="match status" value="1"/>
</dbReference>
<dbReference type="Gene3D" id="6.10.140.2100">
    <property type="match status" value="1"/>
</dbReference>
<dbReference type="Gene3D" id="6.10.140.2110">
    <property type="match status" value="1"/>
</dbReference>
<dbReference type="InterPro" id="IPR000971">
    <property type="entry name" value="Globin"/>
</dbReference>
<dbReference type="InterPro" id="IPR009050">
    <property type="entry name" value="Globin-like_sf"/>
</dbReference>
<dbReference type="InterPro" id="IPR002335">
    <property type="entry name" value="Myoglobin"/>
</dbReference>
<dbReference type="PANTHER" id="PTHR47132">
    <property type="entry name" value="MYOGLOBIN"/>
    <property type="match status" value="1"/>
</dbReference>
<dbReference type="PANTHER" id="PTHR47132:SF1">
    <property type="entry name" value="MYOGLOBIN"/>
    <property type="match status" value="1"/>
</dbReference>
<dbReference type="Pfam" id="PF00042">
    <property type="entry name" value="Globin"/>
    <property type="match status" value="1"/>
</dbReference>
<dbReference type="PRINTS" id="PR00613">
    <property type="entry name" value="MYOGLOBIN"/>
</dbReference>
<dbReference type="SUPFAM" id="SSF46458">
    <property type="entry name" value="Globin-like"/>
    <property type="match status" value="1"/>
</dbReference>
<dbReference type="PROSITE" id="PS01033">
    <property type="entry name" value="GLOBIN"/>
    <property type="match status" value="1"/>
</dbReference>
<protein>
    <recommendedName>
        <fullName>Myoglobin</fullName>
    </recommendedName>
    <alternativeName>
        <fullName evidence="1">Nitrite reductase MB</fullName>
        <ecNumber evidence="1">1.7.-.-</ecNumber>
    </alternativeName>
    <alternativeName>
        <fullName evidence="1">Pseudoperoxidase MB</fullName>
        <ecNumber evidence="1">1.11.1.-</ecNumber>
    </alternativeName>
</protein>
<sequence>MVLSDAEWQLVLNIWAKVEADVAGHGQDILIRLFKGHPETLEKFDKFKHLKTEAEMKASEDLKKHGNTVLTALGGILKKKGHHEAELKPLAQSHATKHKIPIKYLEFISDAIIHVLHSRHPGDFGADAQAAMNKALELFRKDIAAKYKELGFQG</sequence>
<comment type="function">
    <text evidence="1">Monomeric heme protein which primary function is to store oxygen and facilitate its diffusion within muscle tissues. Reversibly binds oxygen through a pentacoordinated heme iron and enables its timely and efficient release as needed during periods of heightened demand. Depending on the oxidative conditions of tissues and cells, and in addition to its ability to bind oxygen, it also has a nitrite reductase activity whereby it regulates the production of bioactive nitric oxide. Under stress conditions, like hypoxia and anoxia, it also protects cells against reactive oxygen species thanks to its pseudoperoxidase activity.</text>
</comment>
<comment type="catalytic activity">
    <reaction evidence="1">
        <text>Fe(III)-heme b-[protein] + nitric oxide + H2O = Fe(II)-heme b-[protein] + nitrite + 2 H(+)</text>
        <dbReference type="Rhea" id="RHEA:77711"/>
        <dbReference type="Rhea" id="RHEA-COMP:18975"/>
        <dbReference type="Rhea" id="RHEA-COMP:18976"/>
        <dbReference type="ChEBI" id="CHEBI:15377"/>
        <dbReference type="ChEBI" id="CHEBI:15378"/>
        <dbReference type="ChEBI" id="CHEBI:16301"/>
        <dbReference type="ChEBI" id="CHEBI:16480"/>
        <dbReference type="ChEBI" id="CHEBI:55376"/>
        <dbReference type="ChEBI" id="CHEBI:60344"/>
    </reaction>
    <physiologicalReaction direction="right-to-left" evidence="1">
        <dbReference type="Rhea" id="RHEA:77713"/>
    </physiologicalReaction>
</comment>
<comment type="catalytic activity">
    <reaction evidence="1">
        <text>H2O2 + AH2 = A + 2 H2O</text>
        <dbReference type="Rhea" id="RHEA:30275"/>
        <dbReference type="ChEBI" id="CHEBI:13193"/>
        <dbReference type="ChEBI" id="CHEBI:15377"/>
        <dbReference type="ChEBI" id="CHEBI:16240"/>
        <dbReference type="ChEBI" id="CHEBI:17499"/>
    </reaction>
</comment>
<comment type="subunit">
    <text evidence="2">Monomeric.</text>
</comment>
<comment type="subcellular location">
    <subcellularLocation>
        <location evidence="1">Cytoplasm</location>
        <location evidence="1">Sarcoplasm</location>
    </subcellularLocation>
</comment>
<comment type="similarity">
    <text evidence="7">Belongs to the globin family.</text>
</comment>
<feature type="chain" id="PRO_0000261578" description="Myoglobin">
    <location>
        <begin position="1"/>
        <end position="154"/>
    </location>
</feature>
<feature type="domain" description="Globin" evidence="7">
    <location>
        <begin position="2"/>
        <end position="148"/>
    </location>
</feature>
<feature type="binding site" evidence="5">
    <location>
        <position position="65"/>
    </location>
    <ligand>
        <name>nitrite</name>
        <dbReference type="ChEBI" id="CHEBI:16301"/>
    </ligand>
</feature>
<feature type="binding site" evidence="3 7">
    <location>
        <position position="65"/>
    </location>
    <ligand>
        <name>O2</name>
        <dbReference type="ChEBI" id="CHEBI:15379"/>
    </ligand>
</feature>
<feature type="binding site" description="proximal binding residue" evidence="1">
    <location>
        <position position="94"/>
    </location>
    <ligand>
        <name>heme b</name>
        <dbReference type="ChEBI" id="CHEBI:60344"/>
    </ligand>
    <ligandPart>
        <name>Fe</name>
        <dbReference type="ChEBI" id="CHEBI:18248"/>
    </ligandPart>
</feature>
<feature type="modified residue" description="Phosphoserine" evidence="6">
    <location>
        <position position="4"/>
    </location>
</feature>
<feature type="modified residue" description="Phosphothreonine" evidence="4">
    <location>
        <position position="68"/>
    </location>
</feature>
<keyword id="KW-0963">Cytoplasm</keyword>
<keyword id="KW-0349">Heme</keyword>
<keyword id="KW-0408">Iron</keyword>
<keyword id="KW-0479">Metal-binding</keyword>
<keyword id="KW-0514">Muscle protein</keyword>
<keyword id="KW-0560">Oxidoreductase</keyword>
<keyword id="KW-0561">Oxygen transport</keyword>
<keyword id="KW-0597">Phosphoprotein</keyword>
<keyword id="KW-0813">Transport</keyword>
<gene>
    <name type="primary">MB</name>
</gene>
<name>MYG_BALED</name>
<organism>
    <name type="scientific">Balaenoptera edeni</name>
    <name type="common">Pigmy Bryde's whale</name>
    <dbReference type="NCBI Taxonomy" id="9769"/>
    <lineage>
        <taxon>Eukaryota</taxon>
        <taxon>Metazoa</taxon>
        <taxon>Chordata</taxon>
        <taxon>Craniata</taxon>
        <taxon>Vertebrata</taxon>
        <taxon>Euteleostomi</taxon>
        <taxon>Mammalia</taxon>
        <taxon>Eutheria</taxon>
        <taxon>Laurasiatheria</taxon>
        <taxon>Artiodactyla</taxon>
        <taxon>Whippomorpha</taxon>
        <taxon>Cetacea</taxon>
        <taxon>Mysticeti</taxon>
        <taxon>Balaenopteridae</taxon>
        <taxon>Balaenoptera</taxon>
    </lineage>
</organism>
<proteinExistence type="evidence at transcript level"/>
<reference key="1">
    <citation type="journal article" date="2006" name="Comp. Biochem. Physiol.">
        <title>cDNA-derived amino acid sequences of myoglobins from nine species of whales and dolphins.</title>
        <authorList>
            <person name="Iwanami K."/>
            <person name="Mita H."/>
            <person name="Yamamoto Y."/>
            <person name="Fujise Y."/>
            <person name="Yamada T."/>
            <person name="Suzuki T."/>
        </authorList>
    </citation>
    <scope>NUCLEOTIDE SEQUENCE [MRNA]</scope>
</reference>